<protein>
    <recommendedName>
        <fullName>Expansin-A10</fullName>
        <shortName>AtEXPA10</shortName>
    </recommendedName>
    <alternativeName>
        <fullName>Alpha-expansin-10</fullName>
        <shortName>At-EXP10</shortName>
        <shortName>AtEx10</shortName>
    </alternativeName>
    <alternativeName>
        <fullName>Ath-ExpAlpha-1.1</fullName>
    </alternativeName>
</protein>
<evidence type="ECO:0000255" key="1"/>
<evidence type="ECO:0000255" key="2">
    <source>
        <dbReference type="PROSITE-ProRule" id="PRU00078"/>
    </source>
</evidence>
<evidence type="ECO:0000255" key="3">
    <source>
        <dbReference type="PROSITE-ProRule" id="PRU00079"/>
    </source>
</evidence>
<evidence type="ECO:0000305" key="4"/>
<sequence length="249" mass="26428">MGHLGFLVMIMVGVMASSVSGYGGGWINAHATFYGGGDASGTMGGACGYGNLYSQGYGTSTAALSTALFNNGLSCGSCFEIRCENDGKWCLPGSIVVTATNFCPPNNALANNNGGWCNPPLEHFDLAQPVFQRIAQYRAGIVPVSYRRVPCRRRGGIRFTINGHSYFNLVLITNVGGAGDVHSAAIKGSRTVWQAMSRNWGQNWQSNSYLNGQALSFKVTTSDGRTVVSFNAAPAGWSYGQTFAGGQFR</sequence>
<name>EXP10_ARATH</name>
<proteinExistence type="evidence at transcript level"/>
<gene>
    <name type="primary">EXPA10</name>
    <name type="synonym">EXP10</name>
    <name type="ordered locus">At1g26770</name>
    <name type="ORF">T24P13.15</name>
    <name type="ORF">T24P13_14</name>
</gene>
<organism>
    <name type="scientific">Arabidopsis thaliana</name>
    <name type="common">Mouse-ear cress</name>
    <dbReference type="NCBI Taxonomy" id="3702"/>
    <lineage>
        <taxon>Eukaryota</taxon>
        <taxon>Viridiplantae</taxon>
        <taxon>Streptophyta</taxon>
        <taxon>Embryophyta</taxon>
        <taxon>Tracheophyta</taxon>
        <taxon>Spermatophyta</taxon>
        <taxon>Magnoliopsida</taxon>
        <taxon>eudicotyledons</taxon>
        <taxon>Gunneridae</taxon>
        <taxon>Pentapetalae</taxon>
        <taxon>rosids</taxon>
        <taxon>malvids</taxon>
        <taxon>Brassicales</taxon>
        <taxon>Brassicaceae</taxon>
        <taxon>Camelineae</taxon>
        <taxon>Arabidopsis</taxon>
    </lineage>
</organism>
<reference key="1">
    <citation type="journal article" date="2000" name="Proc. Natl. Acad. Sci. U.S.A.">
        <title>Altered expression of expansin modulates leaf growth and pedicel abscission in Arabidopsis thaliana.</title>
        <authorList>
            <person name="Cho H.-T."/>
            <person name="Cosgrove D.J."/>
        </authorList>
    </citation>
    <scope>NUCLEOTIDE SEQUENCE [GENOMIC DNA / MRNA]</scope>
    <source>
        <strain>cv. Columbia</strain>
    </source>
</reference>
<reference key="2">
    <citation type="journal article" date="2000" name="Nature">
        <title>Sequence and analysis of chromosome 1 of the plant Arabidopsis thaliana.</title>
        <authorList>
            <person name="Theologis A."/>
            <person name="Ecker J.R."/>
            <person name="Palm C.J."/>
            <person name="Federspiel N.A."/>
            <person name="Kaul S."/>
            <person name="White O."/>
            <person name="Alonso J."/>
            <person name="Altafi H."/>
            <person name="Araujo R."/>
            <person name="Bowman C.L."/>
            <person name="Brooks S.Y."/>
            <person name="Buehler E."/>
            <person name="Chan A."/>
            <person name="Chao Q."/>
            <person name="Chen H."/>
            <person name="Cheuk R.F."/>
            <person name="Chin C.W."/>
            <person name="Chung M.K."/>
            <person name="Conn L."/>
            <person name="Conway A.B."/>
            <person name="Conway A.R."/>
            <person name="Creasy T.H."/>
            <person name="Dewar K."/>
            <person name="Dunn P."/>
            <person name="Etgu P."/>
            <person name="Feldblyum T.V."/>
            <person name="Feng J.-D."/>
            <person name="Fong B."/>
            <person name="Fujii C.Y."/>
            <person name="Gill J.E."/>
            <person name="Goldsmith A.D."/>
            <person name="Haas B."/>
            <person name="Hansen N.F."/>
            <person name="Hughes B."/>
            <person name="Huizar L."/>
            <person name="Hunter J.L."/>
            <person name="Jenkins J."/>
            <person name="Johnson-Hopson C."/>
            <person name="Khan S."/>
            <person name="Khaykin E."/>
            <person name="Kim C.J."/>
            <person name="Koo H.L."/>
            <person name="Kremenetskaia I."/>
            <person name="Kurtz D.B."/>
            <person name="Kwan A."/>
            <person name="Lam B."/>
            <person name="Langin-Hooper S."/>
            <person name="Lee A."/>
            <person name="Lee J.M."/>
            <person name="Lenz C.A."/>
            <person name="Li J.H."/>
            <person name="Li Y.-P."/>
            <person name="Lin X."/>
            <person name="Liu S.X."/>
            <person name="Liu Z.A."/>
            <person name="Luros J.S."/>
            <person name="Maiti R."/>
            <person name="Marziali A."/>
            <person name="Militscher J."/>
            <person name="Miranda M."/>
            <person name="Nguyen M."/>
            <person name="Nierman W.C."/>
            <person name="Osborne B.I."/>
            <person name="Pai G."/>
            <person name="Peterson J."/>
            <person name="Pham P.K."/>
            <person name="Rizzo M."/>
            <person name="Rooney T."/>
            <person name="Rowley D."/>
            <person name="Sakano H."/>
            <person name="Salzberg S.L."/>
            <person name="Schwartz J.R."/>
            <person name="Shinn P."/>
            <person name="Southwick A.M."/>
            <person name="Sun H."/>
            <person name="Tallon L.J."/>
            <person name="Tambunga G."/>
            <person name="Toriumi M.J."/>
            <person name="Town C.D."/>
            <person name="Utterback T."/>
            <person name="Van Aken S."/>
            <person name="Vaysberg M."/>
            <person name="Vysotskaia V.S."/>
            <person name="Walker M."/>
            <person name="Wu D."/>
            <person name="Yu G."/>
            <person name="Fraser C.M."/>
            <person name="Venter J.C."/>
            <person name="Davis R.W."/>
        </authorList>
    </citation>
    <scope>NUCLEOTIDE SEQUENCE [LARGE SCALE GENOMIC DNA]</scope>
    <source>
        <strain>cv. Columbia</strain>
    </source>
</reference>
<reference key="3">
    <citation type="journal article" date="2017" name="Plant J.">
        <title>Araport11: a complete reannotation of the Arabidopsis thaliana reference genome.</title>
        <authorList>
            <person name="Cheng C.Y."/>
            <person name="Krishnakumar V."/>
            <person name="Chan A.P."/>
            <person name="Thibaud-Nissen F."/>
            <person name="Schobel S."/>
            <person name="Town C.D."/>
        </authorList>
    </citation>
    <scope>GENOME REANNOTATION</scope>
    <source>
        <strain>cv. Columbia</strain>
    </source>
</reference>
<reference key="4">
    <citation type="journal article" date="2003" name="Science">
        <title>Empirical analysis of transcriptional activity in the Arabidopsis genome.</title>
        <authorList>
            <person name="Yamada K."/>
            <person name="Lim J."/>
            <person name="Dale J.M."/>
            <person name="Chen H."/>
            <person name="Shinn P."/>
            <person name="Palm C.J."/>
            <person name="Southwick A.M."/>
            <person name="Wu H.C."/>
            <person name="Kim C.J."/>
            <person name="Nguyen M."/>
            <person name="Pham P.K."/>
            <person name="Cheuk R.F."/>
            <person name="Karlin-Newmann G."/>
            <person name="Liu S.X."/>
            <person name="Lam B."/>
            <person name="Sakano H."/>
            <person name="Wu T."/>
            <person name="Yu G."/>
            <person name="Miranda M."/>
            <person name="Quach H.L."/>
            <person name="Tripp M."/>
            <person name="Chang C.H."/>
            <person name="Lee J.M."/>
            <person name="Toriumi M.J."/>
            <person name="Chan M.M."/>
            <person name="Tang C.C."/>
            <person name="Onodera C.S."/>
            <person name="Deng J.M."/>
            <person name="Akiyama K."/>
            <person name="Ansari Y."/>
            <person name="Arakawa T."/>
            <person name="Banh J."/>
            <person name="Banno F."/>
            <person name="Bowser L."/>
            <person name="Brooks S.Y."/>
            <person name="Carninci P."/>
            <person name="Chao Q."/>
            <person name="Choy N."/>
            <person name="Enju A."/>
            <person name="Goldsmith A.D."/>
            <person name="Gurjal M."/>
            <person name="Hansen N.F."/>
            <person name="Hayashizaki Y."/>
            <person name="Johnson-Hopson C."/>
            <person name="Hsuan V.W."/>
            <person name="Iida K."/>
            <person name="Karnes M."/>
            <person name="Khan S."/>
            <person name="Koesema E."/>
            <person name="Ishida J."/>
            <person name="Jiang P.X."/>
            <person name="Jones T."/>
            <person name="Kawai J."/>
            <person name="Kamiya A."/>
            <person name="Meyers C."/>
            <person name="Nakajima M."/>
            <person name="Narusaka M."/>
            <person name="Seki M."/>
            <person name="Sakurai T."/>
            <person name="Satou M."/>
            <person name="Tamse R."/>
            <person name="Vaysberg M."/>
            <person name="Wallender E.K."/>
            <person name="Wong C."/>
            <person name="Yamamura Y."/>
            <person name="Yuan S."/>
            <person name="Shinozaki K."/>
            <person name="Davis R.W."/>
            <person name="Theologis A."/>
            <person name="Ecker J.R."/>
        </authorList>
    </citation>
    <scope>NUCLEOTIDE SEQUENCE [LARGE SCALE MRNA]</scope>
    <source>
        <strain>cv. Columbia</strain>
    </source>
</reference>
<reference key="5">
    <citation type="journal article" date="2004" name="Plant Mol. Biol.">
        <title>Nomenclature for members of the expansin superfamily of genes and proteins.</title>
        <authorList>
            <person name="Kende H."/>
            <person name="Bradford K.J."/>
            <person name="Brummell D.A."/>
            <person name="Cho H.-T."/>
            <person name="Cosgrove D.J."/>
            <person name="Fleming A.J."/>
            <person name="Gehring C."/>
            <person name="Lee Y."/>
            <person name="McQueen-Mason S.J."/>
            <person name="Rose J.K.C."/>
            <person name="Voesenek L.A.C."/>
        </authorList>
    </citation>
    <scope>NOMENCLATURE</scope>
</reference>
<comment type="function">
    <text>Causes loosening and extension of plant cell walls by disrupting non-covalent bonding between cellulose microfibrils and matrix glucans. No enzymatic activity has been found. Plays a major role in control of leaf growth and influences the mechanical breakage behavior of the pedicel.</text>
</comment>
<comment type="subcellular location">
    <subcellularLocation>
        <location>Secreted</location>
        <location>Cell wall</location>
    </subcellularLocation>
    <subcellularLocation>
        <location>Membrane</location>
        <topology>Peripheral membrane protein</topology>
    </subcellularLocation>
</comment>
<comment type="alternative products">
    <event type="alternative splicing"/>
    <isoform>
        <id>Q9LDR9-1</id>
        <name>1</name>
        <sequence type="displayed"/>
    </isoform>
    <text>A number of isoforms are produced. According to EST sequences.</text>
</comment>
<comment type="tissue specificity">
    <text>Most highly expressed in the young leaf petiole and midrib, in trichomes and at the base of the pedicel.</text>
</comment>
<comment type="developmental stage">
    <text>Expression is first seen at the base of the emerging first two true leaves but not of the cotyledons. As leaf development progresses expression begins in the base of the petiole and gradually extends toward the whole midrib and later it is restricted to the vasculature of the petiole and leaf blade and disappears as the leaf matures.</text>
</comment>
<comment type="similarity">
    <text evidence="4">Belongs to the expansin family. Expansin A subfamily.</text>
</comment>
<comment type="online information" name="EXPANSIN homepage">
    <link uri="https://www.dept.psu.edu/biology/groups/expansins/index.htm"/>
</comment>
<keyword id="KW-0025">Alternative splicing</keyword>
<keyword id="KW-0134">Cell wall</keyword>
<keyword id="KW-0961">Cell wall biogenesis/degradation</keyword>
<keyword id="KW-0472">Membrane</keyword>
<keyword id="KW-1185">Reference proteome</keyword>
<keyword id="KW-0964">Secreted</keyword>
<keyword id="KW-0732">Signal</keyword>
<feature type="signal peptide" evidence="1">
    <location>
        <begin position="1"/>
        <end position="21"/>
    </location>
</feature>
<feature type="chain" id="PRO_0000008691" description="Expansin-A10">
    <location>
        <begin position="22"/>
        <end position="249"/>
    </location>
</feature>
<feature type="domain" description="Expansin-like EG45" evidence="3">
    <location>
        <begin position="44"/>
        <end position="156"/>
    </location>
</feature>
<feature type="domain" description="Expansin-like CBD" evidence="2">
    <location>
        <begin position="166"/>
        <end position="245"/>
    </location>
</feature>
<accession>Q9LDR9</accession>
<dbReference type="EMBL" id="AF229437">
    <property type="protein sequence ID" value="AAF61712.1"/>
    <property type="molecule type" value="mRNA"/>
</dbReference>
<dbReference type="EMBL" id="AF229431">
    <property type="protein sequence ID" value="AAF61713.1"/>
    <property type="molecule type" value="Genomic_DNA"/>
</dbReference>
<dbReference type="EMBL" id="AC006535">
    <property type="protein sequence ID" value="AAF87031.1"/>
    <property type="molecule type" value="Genomic_DNA"/>
</dbReference>
<dbReference type="EMBL" id="CP002684">
    <property type="protein sequence ID" value="AEE30731.1"/>
    <property type="molecule type" value="Genomic_DNA"/>
</dbReference>
<dbReference type="EMBL" id="AY052247">
    <property type="protein sequence ID" value="AAK97717.1"/>
    <property type="molecule type" value="mRNA"/>
</dbReference>
<dbReference type="EMBL" id="AY060512">
    <property type="protein sequence ID" value="AAL31125.1"/>
    <property type="molecule type" value="mRNA"/>
</dbReference>
<dbReference type="RefSeq" id="NP_173999.1">
    <molecule id="Q9LDR9-1"/>
    <property type="nucleotide sequence ID" value="NM_102440.4"/>
</dbReference>
<dbReference type="SMR" id="Q9LDR9"/>
<dbReference type="FunCoup" id="Q9LDR9">
    <property type="interactions" value="5"/>
</dbReference>
<dbReference type="STRING" id="3702.Q9LDR9"/>
<dbReference type="PaxDb" id="3702-AT1G26770.2"/>
<dbReference type="ProteomicsDB" id="222304">
    <molecule id="Q9LDR9-1"/>
</dbReference>
<dbReference type="EnsemblPlants" id="AT1G26770.1">
    <molecule id="Q9LDR9-1"/>
    <property type="protein sequence ID" value="AT1G26770.1"/>
    <property type="gene ID" value="AT1G26770"/>
</dbReference>
<dbReference type="GeneID" id="839218"/>
<dbReference type="Gramene" id="AT1G26770.1">
    <molecule id="Q9LDR9-1"/>
    <property type="protein sequence ID" value="AT1G26770.1"/>
    <property type="gene ID" value="AT1G26770"/>
</dbReference>
<dbReference type="KEGG" id="ath:AT1G26770"/>
<dbReference type="Araport" id="AT1G26770"/>
<dbReference type="TAIR" id="AT1G26770">
    <property type="gene designation" value="EXPA10"/>
</dbReference>
<dbReference type="eggNOG" id="ENOG502QPUJ">
    <property type="taxonomic scope" value="Eukaryota"/>
</dbReference>
<dbReference type="HOGENOM" id="CLU_027462_0_1_1"/>
<dbReference type="InParanoid" id="Q9LDR9"/>
<dbReference type="OrthoDB" id="5823761at2759"/>
<dbReference type="PhylomeDB" id="Q9LDR9"/>
<dbReference type="PRO" id="PR:Q9LDR9"/>
<dbReference type="Proteomes" id="UP000006548">
    <property type="component" value="Chromosome 1"/>
</dbReference>
<dbReference type="ExpressionAtlas" id="Q9LDR9">
    <property type="expression patterns" value="baseline and differential"/>
</dbReference>
<dbReference type="GO" id="GO:0005576">
    <property type="term" value="C:extracellular region"/>
    <property type="evidence" value="ECO:0007669"/>
    <property type="project" value="UniProtKB-KW"/>
</dbReference>
<dbReference type="GO" id="GO:0016020">
    <property type="term" value="C:membrane"/>
    <property type="evidence" value="ECO:0007669"/>
    <property type="project" value="UniProtKB-SubCell"/>
</dbReference>
<dbReference type="GO" id="GO:0009653">
    <property type="term" value="P:anatomical structure morphogenesis"/>
    <property type="evidence" value="ECO:0007669"/>
    <property type="project" value="UniProtKB-ARBA"/>
</dbReference>
<dbReference type="GO" id="GO:0009828">
    <property type="term" value="P:plant-type cell wall loosening"/>
    <property type="evidence" value="ECO:0000250"/>
    <property type="project" value="UniProtKB"/>
</dbReference>
<dbReference type="CDD" id="cd22274">
    <property type="entry name" value="DPBB_EXPA_N"/>
    <property type="match status" value="1"/>
</dbReference>
<dbReference type="FunFam" id="2.40.40.10:FF:000001">
    <property type="entry name" value="Expansin"/>
    <property type="match status" value="1"/>
</dbReference>
<dbReference type="FunFam" id="2.60.40.760:FF:000001">
    <property type="entry name" value="Expansin"/>
    <property type="match status" value="1"/>
</dbReference>
<dbReference type="Gene3D" id="2.60.40.760">
    <property type="entry name" value="Expansin, cellulose-binding-like domain"/>
    <property type="match status" value="1"/>
</dbReference>
<dbReference type="Gene3D" id="2.40.40.10">
    <property type="entry name" value="RlpA-like domain"/>
    <property type="match status" value="1"/>
</dbReference>
<dbReference type="InterPro" id="IPR007118">
    <property type="entry name" value="Expan_Lol_pI"/>
</dbReference>
<dbReference type="InterPro" id="IPR002963">
    <property type="entry name" value="Expansin"/>
</dbReference>
<dbReference type="InterPro" id="IPR007112">
    <property type="entry name" value="Expansin/allergen_DPBB_dom"/>
</dbReference>
<dbReference type="InterPro" id="IPR007117">
    <property type="entry name" value="Expansin_CBD"/>
</dbReference>
<dbReference type="InterPro" id="IPR036749">
    <property type="entry name" value="Expansin_CBD_sf"/>
</dbReference>
<dbReference type="InterPro" id="IPR009009">
    <property type="entry name" value="RlpA-like_DPBB"/>
</dbReference>
<dbReference type="InterPro" id="IPR036908">
    <property type="entry name" value="RlpA-like_sf"/>
</dbReference>
<dbReference type="PANTHER" id="PTHR31867">
    <property type="entry name" value="EXPANSIN-A15"/>
    <property type="match status" value="1"/>
</dbReference>
<dbReference type="Pfam" id="PF03330">
    <property type="entry name" value="DPBB_1"/>
    <property type="match status" value="1"/>
</dbReference>
<dbReference type="Pfam" id="PF01357">
    <property type="entry name" value="Expansin_C"/>
    <property type="match status" value="1"/>
</dbReference>
<dbReference type="PRINTS" id="PR01226">
    <property type="entry name" value="EXPANSIN"/>
</dbReference>
<dbReference type="PRINTS" id="PR01225">
    <property type="entry name" value="EXPANSNFAMLY"/>
</dbReference>
<dbReference type="SMART" id="SM00837">
    <property type="entry name" value="DPBB_1"/>
    <property type="match status" value="1"/>
</dbReference>
<dbReference type="SUPFAM" id="SSF50685">
    <property type="entry name" value="Barwin-like endoglucanases"/>
    <property type="match status" value="1"/>
</dbReference>
<dbReference type="SUPFAM" id="SSF49590">
    <property type="entry name" value="PHL pollen allergen"/>
    <property type="match status" value="1"/>
</dbReference>
<dbReference type="PROSITE" id="PS50843">
    <property type="entry name" value="EXPANSIN_CBD"/>
    <property type="match status" value="1"/>
</dbReference>
<dbReference type="PROSITE" id="PS50842">
    <property type="entry name" value="EXPANSIN_EG45"/>
    <property type="match status" value="1"/>
</dbReference>